<organism>
    <name type="scientific">Philodryas olfersii</name>
    <name type="common">Green snake</name>
    <dbReference type="NCBI Taxonomy" id="120305"/>
    <lineage>
        <taxon>Eukaryota</taxon>
        <taxon>Metazoa</taxon>
        <taxon>Chordata</taxon>
        <taxon>Craniata</taxon>
        <taxon>Vertebrata</taxon>
        <taxon>Euteleostomi</taxon>
        <taxon>Lepidosauria</taxon>
        <taxon>Squamata</taxon>
        <taxon>Bifurcata</taxon>
        <taxon>Unidentata</taxon>
        <taxon>Episquamata</taxon>
        <taxon>Toxicofera</taxon>
        <taxon>Serpentes</taxon>
        <taxon>Colubroidea</taxon>
        <taxon>Dipsadidae</taxon>
        <taxon>Philodryas</taxon>
    </lineage>
</organism>
<reference key="1">
    <citation type="journal article" date="2008" name="Mol. Cell. Proteomics">
        <title>Evolution of an arsenal: structural and functional diversification of the venom system in the advanced snakes (Caenophidia).</title>
        <authorList>
            <person name="Fry B.G."/>
            <person name="Scheib H."/>
            <person name="van der Weerd L."/>
            <person name="Young B."/>
            <person name="McNaughtan J."/>
            <person name="Ramjan S.F.R."/>
            <person name="Vidal N."/>
            <person name="Poelmann R.E."/>
            <person name="Norman J.A."/>
        </authorList>
    </citation>
    <scope>NUCLEOTIDE SEQUENCE [MRNA]</scope>
    <source>
        <tissue>Venom gland</tissue>
    </source>
</reference>
<protein>
    <recommendedName>
        <fullName evidence="4">Waprin-Phi3</fullName>
    </recommendedName>
</protein>
<sequence length="80" mass="8891">MKPWILLLLAGLLILSTQLTTAKTTKQLRLPKVKPGECPKVKIPPDYPCNQYCVWDFDCEGNKKCCPVGCAKECFPPGPL</sequence>
<name>WAP3_PHIOL</name>
<proteinExistence type="inferred from homology"/>
<evidence type="ECO:0000250" key="1">
    <source>
        <dbReference type="UniProtKB" id="P83952"/>
    </source>
</evidence>
<evidence type="ECO:0000255" key="2"/>
<evidence type="ECO:0000255" key="3">
    <source>
        <dbReference type="PROSITE-ProRule" id="PRU00722"/>
    </source>
</evidence>
<evidence type="ECO:0000303" key="4">
    <source>
    </source>
</evidence>
<evidence type="ECO:0000305" key="5"/>
<evidence type="ECO:0000305" key="6">
    <source>
    </source>
</evidence>
<dbReference type="EMBL" id="EU029746">
    <property type="protein sequence ID" value="ABU68546.1"/>
    <property type="molecule type" value="mRNA"/>
</dbReference>
<dbReference type="SMR" id="A7X4M7"/>
<dbReference type="GO" id="GO:0005576">
    <property type="term" value="C:extracellular region"/>
    <property type="evidence" value="ECO:0000250"/>
    <property type="project" value="UniProtKB"/>
</dbReference>
<dbReference type="GO" id="GO:0005615">
    <property type="term" value="C:extracellular space"/>
    <property type="evidence" value="ECO:0007669"/>
    <property type="project" value="TreeGrafter"/>
</dbReference>
<dbReference type="GO" id="GO:0004867">
    <property type="term" value="F:serine-type endopeptidase inhibitor activity"/>
    <property type="evidence" value="ECO:0007669"/>
    <property type="project" value="TreeGrafter"/>
</dbReference>
<dbReference type="GO" id="GO:0042742">
    <property type="term" value="P:defense response to bacterium"/>
    <property type="evidence" value="ECO:0007669"/>
    <property type="project" value="UniProtKB-KW"/>
</dbReference>
<dbReference type="GO" id="GO:0044278">
    <property type="term" value="P:venom-mediated disruption of cell wall in another organism"/>
    <property type="evidence" value="ECO:0000250"/>
    <property type="project" value="UniProtKB"/>
</dbReference>
<dbReference type="Gene3D" id="4.10.75.10">
    <property type="entry name" value="Elafin-like"/>
    <property type="match status" value="1"/>
</dbReference>
<dbReference type="InterPro" id="IPR036645">
    <property type="entry name" value="Elafin-like_sf"/>
</dbReference>
<dbReference type="InterPro" id="IPR008197">
    <property type="entry name" value="WAP_dom"/>
</dbReference>
<dbReference type="InterPro" id="IPR050514">
    <property type="entry name" value="WAP_four-disulfide_core"/>
</dbReference>
<dbReference type="PANTHER" id="PTHR19441:SF95">
    <property type="entry name" value="PERLWAPIN ISOFORM X1"/>
    <property type="match status" value="1"/>
</dbReference>
<dbReference type="PANTHER" id="PTHR19441">
    <property type="entry name" value="WHEY ACDIC PROTEIN WAP"/>
    <property type="match status" value="1"/>
</dbReference>
<dbReference type="Pfam" id="PF00095">
    <property type="entry name" value="WAP"/>
    <property type="match status" value="1"/>
</dbReference>
<dbReference type="PRINTS" id="PR00003">
    <property type="entry name" value="4DISULPHCORE"/>
</dbReference>
<dbReference type="SMART" id="SM00217">
    <property type="entry name" value="WAP"/>
    <property type="match status" value="1"/>
</dbReference>
<dbReference type="SUPFAM" id="SSF57256">
    <property type="entry name" value="Elafin-like"/>
    <property type="match status" value="1"/>
</dbReference>
<dbReference type="PROSITE" id="PS51390">
    <property type="entry name" value="WAP"/>
    <property type="match status" value="1"/>
</dbReference>
<feature type="signal peptide" evidence="2">
    <location>
        <begin position="1"/>
        <end position="22"/>
    </location>
</feature>
<feature type="chain" id="PRO_0000314689" description="Waprin-Phi3">
    <location>
        <begin position="23"/>
        <end position="80"/>
    </location>
</feature>
<feature type="domain" description="WAP" evidence="3">
    <location>
        <begin position="31"/>
        <end position="78"/>
    </location>
</feature>
<feature type="disulfide bond" evidence="3">
    <location>
        <begin position="38"/>
        <end position="66"/>
    </location>
</feature>
<feature type="disulfide bond" evidence="3">
    <location>
        <begin position="49"/>
        <end position="70"/>
    </location>
</feature>
<feature type="disulfide bond" evidence="3">
    <location>
        <begin position="53"/>
        <end position="65"/>
    </location>
</feature>
<feature type="disulfide bond" evidence="3">
    <location>
        <begin position="59"/>
        <end position="74"/>
    </location>
</feature>
<keyword id="KW-0044">Antibiotic</keyword>
<keyword id="KW-0929">Antimicrobial</keyword>
<keyword id="KW-1015">Disulfide bond</keyword>
<keyword id="KW-0964">Secreted</keyword>
<keyword id="KW-0732">Signal</keyword>
<comment type="function">
    <text evidence="1">Damages membranes of susceptible bacteria. Has no hemolytic activity. Not toxic to mice. Does not inhibit the proteinases elastase and cathepsin G.</text>
</comment>
<comment type="subcellular location">
    <subcellularLocation>
        <location evidence="6">Secreted</location>
    </subcellularLocation>
</comment>
<comment type="tissue specificity">
    <text evidence="6">Expressed by the venom gland.</text>
</comment>
<comment type="similarity">
    <text evidence="5">Belongs to the venom waprin family.</text>
</comment>
<accession>A7X4M7</accession>